<name>PPK19_DROME</name>
<keyword id="KW-0407">Ion channel</keyword>
<keyword id="KW-0406">Ion transport</keyword>
<keyword id="KW-0472">Membrane</keyword>
<keyword id="KW-1185">Reference proteome</keyword>
<keyword id="KW-0915">Sodium</keyword>
<keyword id="KW-0894">Sodium channel</keyword>
<keyword id="KW-0739">Sodium transport</keyword>
<keyword id="KW-0812">Transmembrane</keyword>
<keyword id="KW-1133">Transmembrane helix</keyword>
<keyword id="KW-0813">Transport</keyword>
<sequence>MLLYTKELVIPRPRPGLLRFRNNPRGIKFREKLCNSFAHSNIHGMQHVFGEQHLWQRCLWLAIVLGAVITGFSLYTVLMHRHSEQLLVSLIETTQLPVYHIDFPAVAVCPWNHFNWQRAPSAFIRFLPRHPNAELRETFRQLLASMDIMNFSNFNRIRILTKRNLTGISYLKMTDLMNFMTYRCDELFVADSCVFDETPYDCCKLFVREQTVKGQCLVFNSMISENSRKKHLINQFYPHKLSTAGEDSGLKFTINASYSFMNNIDALTPFGMNLMIKEPRQWSNEMMYHLYPDTENFVAVHPLVTETSPNTYEMSPKKRRCYFDDEKNPTFQNTSLTYNRENCLVVCLHLVVWKTCQCSLPAFLPPIDGVPECGINDAQCLGNNSDIFTYVKMGDQEKYINDSRQGHFCDCPDNCNSRLYEMSLNVRKLDYPKNSTDQLIKAQVYYGQRVMTKIITKLKYTNIDLLANFGGIISLYIGASVMSFIELLFVLGKLMWGFIRDARIKLKEYTK</sequence>
<proteinExistence type="evidence at transcript level"/>
<organism>
    <name type="scientific">Drosophila melanogaster</name>
    <name type="common">Fruit fly</name>
    <dbReference type="NCBI Taxonomy" id="7227"/>
    <lineage>
        <taxon>Eukaryota</taxon>
        <taxon>Metazoa</taxon>
        <taxon>Ecdysozoa</taxon>
        <taxon>Arthropoda</taxon>
        <taxon>Hexapoda</taxon>
        <taxon>Insecta</taxon>
        <taxon>Pterygota</taxon>
        <taxon>Neoptera</taxon>
        <taxon>Endopterygota</taxon>
        <taxon>Diptera</taxon>
        <taxon>Brachycera</taxon>
        <taxon>Muscomorpha</taxon>
        <taxon>Ephydroidea</taxon>
        <taxon>Drosophilidae</taxon>
        <taxon>Drosophila</taxon>
        <taxon>Sophophora</taxon>
    </lineage>
</organism>
<gene>
    <name type="primary">ppk19</name>
    <name type="ORF">CG18287</name>
</gene>
<reference evidence="5 6" key="1">
    <citation type="journal article" date="2003" name="Proc. Natl. Acad. Sci. U.S.A.">
        <title>Drosophila DEG/ENaC pickpocket genes are expressed in the tracheal system, where they may be involved in liquid clearance.</title>
        <authorList>
            <person name="Liu L."/>
            <person name="Johnson W.A."/>
            <person name="Welsh M.J."/>
        </authorList>
    </citation>
    <scope>NUCLEOTIDE SEQUENCE [MRNA]</scope>
    <scope>FUNCTION</scope>
    <scope>TISSUE SPECIFICITY</scope>
</reference>
<reference key="2">
    <citation type="journal article" date="2000" name="Science">
        <title>The genome sequence of Drosophila melanogaster.</title>
        <authorList>
            <person name="Adams M.D."/>
            <person name="Celniker S.E."/>
            <person name="Holt R.A."/>
            <person name="Evans C.A."/>
            <person name="Gocayne J.D."/>
            <person name="Amanatides P.G."/>
            <person name="Scherer S.E."/>
            <person name="Li P.W."/>
            <person name="Hoskins R.A."/>
            <person name="Galle R.F."/>
            <person name="George R.A."/>
            <person name="Lewis S.E."/>
            <person name="Richards S."/>
            <person name="Ashburner M."/>
            <person name="Henderson S.N."/>
            <person name="Sutton G.G."/>
            <person name="Wortman J.R."/>
            <person name="Yandell M.D."/>
            <person name="Zhang Q."/>
            <person name="Chen L.X."/>
            <person name="Brandon R.C."/>
            <person name="Rogers Y.-H.C."/>
            <person name="Blazej R.G."/>
            <person name="Champe M."/>
            <person name="Pfeiffer B.D."/>
            <person name="Wan K.H."/>
            <person name="Doyle C."/>
            <person name="Baxter E.G."/>
            <person name="Helt G."/>
            <person name="Nelson C.R."/>
            <person name="Miklos G.L.G."/>
            <person name="Abril J.F."/>
            <person name="Agbayani A."/>
            <person name="An H.-J."/>
            <person name="Andrews-Pfannkoch C."/>
            <person name="Baldwin D."/>
            <person name="Ballew R.M."/>
            <person name="Basu A."/>
            <person name="Baxendale J."/>
            <person name="Bayraktaroglu L."/>
            <person name="Beasley E.M."/>
            <person name="Beeson K.Y."/>
            <person name="Benos P.V."/>
            <person name="Berman B.P."/>
            <person name="Bhandari D."/>
            <person name="Bolshakov S."/>
            <person name="Borkova D."/>
            <person name="Botchan M.R."/>
            <person name="Bouck J."/>
            <person name="Brokstein P."/>
            <person name="Brottier P."/>
            <person name="Burtis K.C."/>
            <person name="Busam D.A."/>
            <person name="Butler H."/>
            <person name="Cadieu E."/>
            <person name="Center A."/>
            <person name="Chandra I."/>
            <person name="Cherry J.M."/>
            <person name="Cawley S."/>
            <person name="Dahlke C."/>
            <person name="Davenport L.B."/>
            <person name="Davies P."/>
            <person name="de Pablos B."/>
            <person name="Delcher A."/>
            <person name="Deng Z."/>
            <person name="Mays A.D."/>
            <person name="Dew I."/>
            <person name="Dietz S.M."/>
            <person name="Dodson K."/>
            <person name="Doup L.E."/>
            <person name="Downes M."/>
            <person name="Dugan-Rocha S."/>
            <person name="Dunkov B.C."/>
            <person name="Dunn P."/>
            <person name="Durbin K.J."/>
            <person name="Evangelista C.C."/>
            <person name="Ferraz C."/>
            <person name="Ferriera S."/>
            <person name="Fleischmann W."/>
            <person name="Fosler C."/>
            <person name="Gabrielian A.E."/>
            <person name="Garg N.S."/>
            <person name="Gelbart W.M."/>
            <person name="Glasser K."/>
            <person name="Glodek A."/>
            <person name="Gong F."/>
            <person name="Gorrell J.H."/>
            <person name="Gu Z."/>
            <person name="Guan P."/>
            <person name="Harris M."/>
            <person name="Harris N.L."/>
            <person name="Harvey D.A."/>
            <person name="Heiman T.J."/>
            <person name="Hernandez J.R."/>
            <person name="Houck J."/>
            <person name="Hostin D."/>
            <person name="Houston K.A."/>
            <person name="Howland T.J."/>
            <person name="Wei M.-H."/>
            <person name="Ibegwam C."/>
            <person name="Jalali M."/>
            <person name="Kalush F."/>
            <person name="Karpen G.H."/>
            <person name="Ke Z."/>
            <person name="Kennison J.A."/>
            <person name="Ketchum K.A."/>
            <person name="Kimmel B.E."/>
            <person name="Kodira C.D."/>
            <person name="Kraft C.L."/>
            <person name="Kravitz S."/>
            <person name="Kulp D."/>
            <person name="Lai Z."/>
            <person name="Lasko P."/>
            <person name="Lei Y."/>
            <person name="Levitsky A.A."/>
            <person name="Li J.H."/>
            <person name="Li Z."/>
            <person name="Liang Y."/>
            <person name="Lin X."/>
            <person name="Liu X."/>
            <person name="Mattei B."/>
            <person name="McIntosh T.C."/>
            <person name="McLeod M.P."/>
            <person name="McPherson D."/>
            <person name="Merkulov G."/>
            <person name="Milshina N.V."/>
            <person name="Mobarry C."/>
            <person name="Morris J."/>
            <person name="Moshrefi A."/>
            <person name="Mount S.M."/>
            <person name="Moy M."/>
            <person name="Murphy B."/>
            <person name="Murphy L."/>
            <person name="Muzny D.M."/>
            <person name="Nelson D.L."/>
            <person name="Nelson D.R."/>
            <person name="Nelson K.A."/>
            <person name="Nixon K."/>
            <person name="Nusskern D.R."/>
            <person name="Pacleb J.M."/>
            <person name="Palazzolo M."/>
            <person name="Pittman G.S."/>
            <person name="Pan S."/>
            <person name="Pollard J."/>
            <person name="Puri V."/>
            <person name="Reese M.G."/>
            <person name="Reinert K."/>
            <person name="Remington K."/>
            <person name="Saunders R.D.C."/>
            <person name="Scheeler F."/>
            <person name="Shen H."/>
            <person name="Shue B.C."/>
            <person name="Siden-Kiamos I."/>
            <person name="Simpson M."/>
            <person name="Skupski M.P."/>
            <person name="Smith T.J."/>
            <person name="Spier E."/>
            <person name="Spradling A.C."/>
            <person name="Stapleton M."/>
            <person name="Strong R."/>
            <person name="Sun E."/>
            <person name="Svirskas R."/>
            <person name="Tector C."/>
            <person name="Turner R."/>
            <person name="Venter E."/>
            <person name="Wang A.H."/>
            <person name="Wang X."/>
            <person name="Wang Z.-Y."/>
            <person name="Wassarman D.A."/>
            <person name="Weinstock G.M."/>
            <person name="Weissenbach J."/>
            <person name="Williams S.M."/>
            <person name="Woodage T."/>
            <person name="Worley K.C."/>
            <person name="Wu D."/>
            <person name="Yang S."/>
            <person name="Yao Q.A."/>
            <person name="Ye J."/>
            <person name="Yeh R.-F."/>
            <person name="Zaveri J.S."/>
            <person name="Zhan M."/>
            <person name="Zhang G."/>
            <person name="Zhao Q."/>
            <person name="Zheng L."/>
            <person name="Zheng X.H."/>
            <person name="Zhong F.N."/>
            <person name="Zhong W."/>
            <person name="Zhou X."/>
            <person name="Zhu S.C."/>
            <person name="Zhu X."/>
            <person name="Smith H.O."/>
            <person name="Gibbs R.A."/>
            <person name="Myers E.W."/>
            <person name="Rubin G.M."/>
            <person name="Venter J.C."/>
        </authorList>
    </citation>
    <scope>NUCLEOTIDE SEQUENCE [LARGE SCALE GENOMIC DNA]</scope>
    <source>
        <strain>Berkeley</strain>
    </source>
</reference>
<reference key="3">
    <citation type="journal article" date="2002" name="Genome Biol.">
        <title>Annotation of the Drosophila melanogaster euchromatic genome: a systematic review.</title>
        <authorList>
            <person name="Misra S."/>
            <person name="Crosby M.A."/>
            <person name="Mungall C.J."/>
            <person name="Matthews B.B."/>
            <person name="Campbell K.S."/>
            <person name="Hradecky P."/>
            <person name="Huang Y."/>
            <person name="Kaminker J.S."/>
            <person name="Millburn G.H."/>
            <person name="Prochnik S.E."/>
            <person name="Smith C.D."/>
            <person name="Tupy J.L."/>
            <person name="Whitfield E.J."/>
            <person name="Bayraktaroglu L."/>
            <person name="Berman B.P."/>
            <person name="Bettencourt B.R."/>
            <person name="Celniker S.E."/>
            <person name="de Grey A.D.N.J."/>
            <person name="Drysdale R.A."/>
            <person name="Harris N.L."/>
            <person name="Richter J."/>
            <person name="Russo S."/>
            <person name="Schroeder A.J."/>
            <person name="Shu S.Q."/>
            <person name="Stapleton M."/>
            <person name="Yamada C."/>
            <person name="Ashburner M."/>
            <person name="Gelbart W.M."/>
            <person name="Rubin G.M."/>
            <person name="Lewis S.E."/>
        </authorList>
    </citation>
    <scope>GENOME REANNOTATION</scope>
    <source>
        <strain>Berkeley</strain>
    </source>
</reference>
<reference evidence="5" key="4">
    <citation type="journal article" date="2003" name="Neuron">
        <title>Contribution of Drosophila DEG/ENaC genes to salt taste.</title>
        <authorList>
            <person name="Liu L."/>
            <person name="Leonard A.S."/>
            <person name="Motto D.G."/>
            <person name="Feller M.A."/>
            <person name="Price M.P."/>
            <person name="Johnson W.A."/>
            <person name="Welsh M.J."/>
        </authorList>
    </citation>
    <scope>FUNCTION</scope>
    <scope>TISSUE SPECIFICITY</scope>
</reference>
<feature type="chain" id="PRO_0000420126" description="Pickpocket protein 19">
    <location>
        <begin position="1"/>
        <end position="511"/>
    </location>
</feature>
<feature type="transmembrane region" description="Helical" evidence="1">
    <location>
        <begin position="59"/>
        <end position="79"/>
    </location>
</feature>
<feature type="transmembrane region" description="Helical" evidence="1">
    <location>
        <begin position="471"/>
        <end position="491"/>
    </location>
</feature>
<feature type="sequence conflict" description="In Ref. 1; AAO47373." evidence="5" ref="1">
    <original>N</original>
    <variation>S</variation>
    <location>
        <position position="112"/>
    </location>
</feature>
<feature type="sequence conflict" description="In Ref. 1; AAO47373." evidence="5" ref="1">
    <original>R</original>
    <variation>L</variation>
    <location>
        <position position="158"/>
    </location>
</feature>
<feature type="sequence conflict" description="In Ref. 1; AAO47373." evidence="5" ref="1">
    <original>K</original>
    <variation>N</variation>
    <location>
        <position position="230"/>
    </location>
</feature>
<feature type="sequence conflict" description="In Ref. 1; AAO47373." evidence="5" ref="1">
    <original>D</original>
    <variation>E</variation>
    <location>
        <position position="247"/>
    </location>
</feature>
<feature type="sequence conflict" description="In Ref. 1; AAO47373." evidence="5" ref="1">
    <original>S</original>
    <variation>A</variation>
    <location>
        <position position="259"/>
    </location>
</feature>
<feature type="sequence conflict" description="In Ref. 1; AAO47373." evidence="5" ref="1">
    <original>Q</original>
    <variation>R</variation>
    <location>
        <position position="357"/>
    </location>
</feature>
<feature type="sequence conflict" description="In Ref. 1; AAO47373." evidence="5" ref="1">
    <original>R</original>
    <variation>Q</variation>
    <location>
        <position position="418"/>
    </location>
</feature>
<protein>
    <recommendedName>
        <fullName>Pickpocket protein 19</fullName>
        <shortName evidence="4 6">PPK19</shortName>
    </recommendedName>
</protein>
<evidence type="ECO:0000255" key="1"/>
<evidence type="ECO:0000269" key="2">
    <source>
    </source>
</evidence>
<evidence type="ECO:0000269" key="3">
    <source>
    </source>
</evidence>
<evidence type="ECO:0000303" key="4">
    <source>
    </source>
</evidence>
<evidence type="ECO:0000305" key="5"/>
<evidence type="ECO:0000312" key="6">
    <source>
        <dbReference type="EMBL" id="AAO47373.1"/>
    </source>
</evidence>
<dbReference type="EMBL" id="AY226547">
    <property type="protein sequence ID" value="AAO47373.1"/>
    <property type="molecule type" value="mRNA"/>
</dbReference>
<dbReference type="EMBL" id="AE014297">
    <property type="protein sequence ID" value="AAF56913.2"/>
    <property type="molecule type" value="Genomic_DNA"/>
</dbReference>
<dbReference type="RefSeq" id="NP_651708.2">
    <property type="nucleotide sequence ID" value="NM_143451.2"/>
</dbReference>
<dbReference type="BioGRID" id="68353">
    <property type="interactions" value="4"/>
</dbReference>
<dbReference type="FunCoup" id="Q9VAJ3">
    <property type="interactions" value="9"/>
</dbReference>
<dbReference type="IntAct" id="Q9VAJ3">
    <property type="interactions" value="4"/>
</dbReference>
<dbReference type="STRING" id="7227.FBpp0084817"/>
<dbReference type="PaxDb" id="7227-FBpp0084817"/>
<dbReference type="DNASU" id="43489"/>
<dbReference type="EnsemblMetazoa" id="FBtr0085451">
    <property type="protein sequence ID" value="FBpp0084817"/>
    <property type="gene ID" value="FBgn0039679"/>
</dbReference>
<dbReference type="GeneID" id="43489"/>
<dbReference type="KEGG" id="dme:Dmel_CG18287"/>
<dbReference type="UCSC" id="CG18287-RA">
    <property type="organism name" value="d. melanogaster"/>
</dbReference>
<dbReference type="AGR" id="FB:FBgn0039679"/>
<dbReference type="CTD" id="43489"/>
<dbReference type="FlyBase" id="FBgn0039679">
    <property type="gene designation" value="ppk19"/>
</dbReference>
<dbReference type="VEuPathDB" id="VectorBase:FBgn0039679"/>
<dbReference type="eggNOG" id="KOG4294">
    <property type="taxonomic scope" value="Eukaryota"/>
</dbReference>
<dbReference type="HOGENOM" id="CLU_024950_3_1_1"/>
<dbReference type="InParanoid" id="Q9VAJ3"/>
<dbReference type="OMA" id="QTYLNVR"/>
<dbReference type="OrthoDB" id="6021021at2759"/>
<dbReference type="PhylomeDB" id="Q9VAJ3"/>
<dbReference type="Reactome" id="R-DME-2672351">
    <property type="pathway name" value="Stimuli-sensing channels"/>
</dbReference>
<dbReference type="BioGRID-ORCS" id="43489">
    <property type="hits" value="0 hits in 1 CRISPR screen"/>
</dbReference>
<dbReference type="GenomeRNAi" id="43489"/>
<dbReference type="PRO" id="PR:Q9VAJ3"/>
<dbReference type="Proteomes" id="UP000000803">
    <property type="component" value="Chromosome 3R"/>
</dbReference>
<dbReference type="Bgee" id="FBgn0039679">
    <property type="expression patterns" value="Expressed in adult olfactory receptor neuron Or65 (Drosophila) in antenna and 7 other cell types or tissues"/>
</dbReference>
<dbReference type="GO" id="GO:0016020">
    <property type="term" value="C:membrane"/>
    <property type="evidence" value="ECO:0000250"/>
    <property type="project" value="FlyBase"/>
</dbReference>
<dbReference type="GO" id="GO:0005886">
    <property type="term" value="C:plasma membrane"/>
    <property type="evidence" value="ECO:0000314"/>
    <property type="project" value="FlyBase"/>
</dbReference>
<dbReference type="GO" id="GO:0034706">
    <property type="term" value="C:sodium channel complex"/>
    <property type="evidence" value="ECO:0000353"/>
    <property type="project" value="FlyBase"/>
</dbReference>
<dbReference type="GO" id="GO:0015280">
    <property type="term" value="F:ligand-gated sodium channel activity"/>
    <property type="evidence" value="ECO:0000318"/>
    <property type="project" value="GO_Central"/>
</dbReference>
<dbReference type="GO" id="GO:0140135">
    <property type="term" value="F:mechanosensitive monoatomic cation channel activity"/>
    <property type="evidence" value="ECO:0000314"/>
    <property type="project" value="FlyBase"/>
</dbReference>
<dbReference type="GO" id="GO:0160128">
    <property type="term" value="F:pH-gated monoatomic ion channel activity"/>
    <property type="evidence" value="ECO:0000314"/>
    <property type="project" value="FlyBase"/>
</dbReference>
<dbReference type="GO" id="GO:0005272">
    <property type="term" value="F:sodium channel activity"/>
    <property type="evidence" value="ECO:0000314"/>
    <property type="project" value="FlyBase"/>
</dbReference>
<dbReference type="GO" id="GO:0050968">
    <property type="term" value="P:detection of chemical stimulus involved in sensory perception of pain"/>
    <property type="evidence" value="ECO:0000315"/>
    <property type="project" value="FlyBase"/>
</dbReference>
<dbReference type="GO" id="GO:0050966">
    <property type="term" value="P:detection of mechanical stimulus involved in sensory perception of pain"/>
    <property type="evidence" value="ECO:0000315"/>
    <property type="project" value="FlyBase"/>
</dbReference>
<dbReference type="GO" id="GO:0035002">
    <property type="term" value="P:liquid clearance, open tracheal system"/>
    <property type="evidence" value="ECO:0000303"/>
    <property type="project" value="UniProtKB"/>
</dbReference>
<dbReference type="GO" id="GO:0009651">
    <property type="term" value="P:response to salt stress"/>
    <property type="evidence" value="ECO:0000315"/>
    <property type="project" value="UniProtKB"/>
</dbReference>
<dbReference type="GO" id="GO:0035199">
    <property type="term" value="P:salt aversion"/>
    <property type="evidence" value="ECO:0000315"/>
    <property type="project" value="UniProtKB"/>
</dbReference>
<dbReference type="GO" id="GO:0050914">
    <property type="term" value="P:sensory perception of salty taste"/>
    <property type="evidence" value="ECO:0000315"/>
    <property type="project" value="FlyBase"/>
</dbReference>
<dbReference type="GO" id="GO:0035725">
    <property type="term" value="P:sodium ion transmembrane transport"/>
    <property type="evidence" value="ECO:0000314"/>
    <property type="project" value="FlyBase"/>
</dbReference>
<dbReference type="FunFam" id="2.60.470.10:FF:000022">
    <property type="entry name" value="Pickpocket protein 19"/>
    <property type="match status" value="1"/>
</dbReference>
<dbReference type="Gene3D" id="2.60.470.10">
    <property type="entry name" value="Acid-sensing ion channels like domains"/>
    <property type="match status" value="1"/>
</dbReference>
<dbReference type="Gene3D" id="1.10.287.770">
    <property type="entry name" value="YojJ-like"/>
    <property type="match status" value="1"/>
</dbReference>
<dbReference type="InterPro" id="IPR001873">
    <property type="entry name" value="ENaC"/>
</dbReference>
<dbReference type="PANTHER" id="PTHR11690">
    <property type="entry name" value="AMILORIDE-SENSITIVE SODIUM CHANNEL-RELATED"/>
    <property type="match status" value="1"/>
</dbReference>
<dbReference type="PANTHER" id="PTHR11690:SF300">
    <property type="entry name" value="PICKPOCKET PROTEIN 19"/>
    <property type="match status" value="1"/>
</dbReference>
<dbReference type="Pfam" id="PF00858">
    <property type="entry name" value="ASC"/>
    <property type="match status" value="1"/>
</dbReference>
<dbReference type="PRINTS" id="PR01078">
    <property type="entry name" value="AMINACHANNEL"/>
</dbReference>
<comment type="function">
    <text evidence="3 4 5">Part of a complex that plays a role in tracheal liquid clearance. In both larvae and adults, contributes to the behavioral response to salt. Probable role in sodium transport.</text>
</comment>
<comment type="subcellular location">
    <subcellularLocation>
        <location evidence="1">Membrane</location>
        <topology evidence="1">Multi-pass membrane protein</topology>
    </subcellularLocation>
</comment>
<comment type="tissue specificity">
    <text evidence="2 3">Expressed in the tracheal system. Expressed in the taste-sensing terminal organ of the larval head. In adults, expressed in hairs on the tibia, femur and wing margin, but not in hairs on the tarsi of the leg.</text>
</comment>
<comment type="similarity">
    <text evidence="5">Belongs to the amiloride-sensitive sodium channel (TC 1.A.6) family.</text>
</comment>
<accession>Q9VAJ3</accession>
<accession>Q86LG6</accession>